<feature type="chain" id="PRO_0000370952" description="ATP synthase subunit delta">
    <location>
        <begin position="1"/>
        <end position="182"/>
    </location>
</feature>
<accession>A9KK95</accession>
<proteinExistence type="inferred from homology"/>
<comment type="function">
    <text evidence="1">F(1)F(0) ATP synthase produces ATP from ADP in the presence of a proton or sodium gradient. F-type ATPases consist of two structural domains, F(1) containing the extramembraneous catalytic core and F(0) containing the membrane proton channel, linked together by a central stalk and a peripheral stalk. During catalysis, ATP synthesis in the catalytic domain of F(1) is coupled via a rotary mechanism of the central stalk subunits to proton translocation.</text>
</comment>
<comment type="function">
    <text evidence="1">This protein is part of the stalk that links CF(0) to CF(1). It either transmits conformational changes from CF(0) to CF(1) or is implicated in proton conduction.</text>
</comment>
<comment type="subunit">
    <text evidence="1">F-type ATPases have 2 components, F(1) - the catalytic core - and F(0) - the membrane proton channel. F(1) has five subunits: alpha(3), beta(3), gamma(1), delta(1), epsilon(1). F(0) has three main subunits: a(1), b(2) and c(10-14). The alpha and beta chains form an alternating ring which encloses part of the gamma chain. F(1) is attached to F(0) by a central stalk formed by the gamma and epsilon chains, while a peripheral stalk is formed by the delta and b chains.</text>
</comment>
<comment type="subcellular location">
    <subcellularLocation>
        <location evidence="1">Cell membrane</location>
        <topology evidence="1">Peripheral membrane protein</topology>
    </subcellularLocation>
</comment>
<comment type="similarity">
    <text evidence="1">Belongs to the ATPase delta chain family.</text>
</comment>
<dbReference type="EMBL" id="CP000885">
    <property type="protein sequence ID" value="ABX44086.1"/>
    <property type="molecule type" value="Genomic_DNA"/>
</dbReference>
<dbReference type="RefSeq" id="WP_012201734.1">
    <property type="nucleotide sequence ID" value="NC_010001.1"/>
</dbReference>
<dbReference type="SMR" id="A9KK95"/>
<dbReference type="STRING" id="357809.Cphy_3739"/>
<dbReference type="KEGG" id="cpy:Cphy_3739"/>
<dbReference type="eggNOG" id="COG0712">
    <property type="taxonomic scope" value="Bacteria"/>
</dbReference>
<dbReference type="HOGENOM" id="CLU_085114_4_0_9"/>
<dbReference type="OrthoDB" id="9802471at2"/>
<dbReference type="Proteomes" id="UP000000370">
    <property type="component" value="Chromosome"/>
</dbReference>
<dbReference type="GO" id="GO:0005886">
    <property type="term" value="C:plasma membrane"/>
    <property type="evidence" value="ECO:0007669"/>
    <property type="project" value="UniProtKB-SubCell"/>
</dbReference>
<dbReference type="GO" id="GO:0045259">
    <property type="term" value="C:proton-transporting ATP synthase complex"/>
    <property type="evidence" value="ECO:0007669"/>
    <property type="project" value="UniProtKB-KW"/>
</dbReference>
<dbReference type="GO" id="GO:0046933">
    <property type="term" value="F:proton-transporting ATP synthase activity, rotational mechanism"/>
    <property type="evidence" value="ECO:0007669"/>
    <property type="project" value="UniProtKB-UniRule"/>
</dbReference>
<dbReference type="Gene3D" id="1.10.520.20">
    <property type="entry name" value="N-terminal domain of the delta subunit of the F1F0-ATP synthase"/>
    <property type="match status" value="1"/>
</dbReference>
<dbReference type="HAMAP" id="MF_01416">
    <property type="entry name" value="ATP_synth_delta_bact"/>
    <property type="match status" value="1"/>
</dbReference>
<dbReference type="InterPro" id="IPR026015">
    <property type="entry name" value="ATP_synth_OSCP/delta_N_sf"/>
</dbReference>
<dbReference type="InterPro" id="IPR000711">
    <property type="entry name" value="ATPase_OSCP/dsu"/>
</dbReference>
<dbReference type="NCBIfam" id="TIGR01145">
    <property type="entry name" value="ATP_synt_delta"/>
    <property type="match status" value="1"/>
</dbReference>
<dbReference type="NCBIfam" id="NF004403">
    <property type="entry name" value="PRK05758.2-4"/>
    <property type="match status" value="1"/>
</dbReference>
<dbReference type="PANTHER" id="PTHR11910">
    <property type="entry name" value="ATP SYNTHASE DELTA CHAIN"/>
    <property type="match status" value="1"/>
</dbReference>
<dbReference type="Pfam" id="PF00213">
    <property type="entry name" value="OSCP"/>
    <property type="match status" value="1"/>
</dbReference>
<dbReference type="PRINTS" id="PR00125">
    <property type="entry name" value="ATPASEDELTA"/>
</dbReference>
<dbReference type="SUPFAM" id="SSF47928">
    <property type="entry name" value="N-terminal domain of the delta subunit of the F1F0-ATP synthase"/>
    <property type="match status" value="1"/>
</dbReference>
<sequence length="182" mass="20669">MAKLVSKTYGEALFDLALENQSLDIIEEEIKAVKMVFNENTELIKFLNHPKITKEEKVAFVENIFKGRVSDDVTGFLVIIIKKGRYDEISGIFDYFLAKVREHKNIGVAYVTSAVEISEQEKEQIKDKLLATTKYVQFEMNYKVDASILGGLIIRIGDRVVDSSLKSKLNTLSKNLFKIQLG</sequence>
<evidence type="ECO:0000255" key="1">
    <source>
        <dbReference type="HAMAP-Rule" id="MF_01416"/>
    </source>
</evidence>
<organism>
    <name type="scientific">Lachnoclostridium phytofermentans (strain ATCC 700394 / DSM 18823 / ISDg)</name>
    <name type="common">Clostridium phytofermentans</name>
    <dbReference type="NCBI Taxonomy" id="357809"/>
    <lineage>
        <taxon>Bacteria</taxon>
        <taxon>Bacillati</taxon>
        <taxon>Bacillota</taxon>
        <taxon>Clostridia</taxon>
        <taxon>Lachnospirales</taxon>
        <taxon>Lachnospiraceae</taxon>
    </lineage>
</organism>
<gene>
    <name evidence="1" type="primary">atpH</name>
    <name type="ordered locus">Cphy_3739</name>
</gene>
<reference key="1">
    <citation type="submission" date="2007-11" db="EMBL/GenBank/DDBJ databases">
        <title>Complete genome sequence of Clostridium phytofermentans ISDg.</title>
        <authorList>
            <person name="Leschine S.B."/>
            <person name="Warnick T.A."/>
            <person name="Blanchard J.L."/>
            <person name="Schnell D.J."/>
            <person name="Petit E.L."/>
            <person name="LaTouf W.G."/>
            <person name="Copeland A."/>
            <person name="Lucas S."/>
            <person name="Lapidus A."/>
            <person name="Barry K."/>
            <person name="Glavina del Rio T."/>
            <person name="Dalin E."/>
            <person name="Tice H."/>
            <person name="Pitluck S."/>
            <person name="Kiss H."/>
            <person name="Brettin T."/>
            <person name="Bruce D."/>
            <person name="Detter J.C."/>
            <person name="Han C."/>
            <person name="Kuske C."/>
            <person name="Schmutz J."/>
            <person name="Larimer F."/>
            <person name="Land M."/>
            <person name="Hauser L."/>
            <person name="Kyrpides N."/>
            <person name="Kim E.A."/>
            <person name="Richardson P."/>
        </authorList>
    </citation>
    <scope>NUCLEOTIDE SEQUENCE [LARGE SCALE GENOMIC DNA]</scope>
    <source>
        <strain>ATCC 700394 / DSM 18823 / ISDg</strain>
    </source>
</reference>
<keyword id="KW-0066">ATP synthesis</keyword>
<keyword id="KW-1003">Cell membrane</keyword>
<keyword id="KW-0139">CF(1)</keyword>
<keyword id="KW-0375">Hydrogen ion transport</keyword>
<keyword id="KW-0406">Ion transport</keyword>
<keyword id="KW-0472">Membrane</keyword>
<keyword id="KW-1185">Reference proteome</keyword>
<keyword id="KW-0813">Transport</keyword>
<name>ATPD_LACP7</name>
<protein>
    <recommendedName>
        <fullName evidence="1">ATP synthase subunit delta</fullName>
    </recommendedName>
    <alternativeName>
        <fullName evidence="1">ATP synthase F(1) sector subunit delta</fullName>
    </alternativeName>
    <alternativeName>
        <fullName evidence="1">F-type ATPase subunit delta</fullName>
        <shortName evidence="1">F-ATPase subunit delta</shortName>
    </alternativeName>
</protein>